<feature type="chain" id="PRO_1000012927" description="Lysine--tRNA ligase">
    <location>
        <begin position="1"/>
        <end position="500"/>
    </location>
</feature>
<feature type="binding site" evidence="1">
    <location>
        <position position="410"/>
    </location>
    <ligand>
        <name>Mg(2+)</name>
        <dbReference type="ChEBI" id="CHEBI:18420"/>
        <label>1</label>
    </ligand>
</feature>
<feature type="binding site" evidence="1">
    <location>
        <position position="417"/>
    </location>
    <ligand>
        <name>Mg(2+)</name>
        <dbReference type="ChEBI" id="CHEBI:18420"/>
        <label>1</label>
    </ligand>
</feature>
<feature type="binding site" evidence="1">
    <location>
        <position position="417"/>
    </location>
    <ligand>
        <name>Mg(2+)</name>
        <dbReference type="ChEBI" id="CHEBI:18420"/>
        <label>2</label>
    </ligand>
</feature>
<organism>
    <name type="scientific">Shewanella denitrificans (strain OS217 / ATCC BAA-1090 / DSM 15013)</name>
    <dbReference type="NCBI Taxonomy" id="318161"/>
    <lineage>
        <taxon>Bacteria</taxon>
        <taxon>Pseudomonadati</taxon>
        <taxon>Pseudomonadota</taxon>
        <taxon>Gammaproteobacteria</taxon>
        <taxon>Alteromonadales</taxon>
        <taxon>Shewanellaceae</taxon>
        <taxon>Shewanella</taxon>
    </lineage>
</organism>
<comment type="catalytic activity">
    <reaction evidence="1">
        <text>tRNA(Lys) + L-lysine + ATP = L-lysyl-tRNA(Lys) + AMP + diphosphate</text>
        <dbReference type="Rhea" id="RHEA:20792"/>
        <dbReference type="Rhea" id="RHEA-COMP:9696"/>
        <dbReference type="Rhea" id="RHEA-COMP:9697"/>
        <dbReference type="ChEBI" id="CHEBI:30616"/>
        <dbReference type="ChEBI" id="CHEBI:32551"/>
        <dbReference type="ChEBI" id="CHEBI:33019"/>
        <dbReference type="ChEBI" id="CHEBI:78442"/>
        <dbReference type="ChEBI" id="CHEBI:78529"/>
        <dbReference type="ChEBI" id="CHEBI:456215"/>
        <dbReference type="EC" id="6.1.1.6"/>
    </reaction>
</comment>
<comment type="cofactor">
    <cofactor evidence="1">
        <name>Mg(2+)</name>
        <dbReference type="ChEBI" id="CHEBI:18420"/>
    </cofactor>
    <text evidence="1">Binds 3 Mg(2+) ions per subunit.</text>
</comment>
<comment type="subunit">
    <text evidence="1">Homodimer.</text>
</comment>
<comment type="subcellular location">
    <subcellularLocation>
        <location evidence="1">Cytoplasm</location>
    </subcellularLocation>
</comment>
<comment type="similarity">
    <text evidence="1">Belongs to the class-II aminoacyl-tRNA synthetase family.</text>
</comment>
<keyword id="KW-0030">Aminoacyl-tRNA synthetase</keyword>
<keyword id="KW-0067">ATP-binding</keyword>
<keyword id="KW-0963">Cytoplasm</keyword>
<keyword id="KW-0436">Ligase</keyword>
<keyword id="KW-0460">Magnesium</keyword>
<keyword id="KW-0479">Metal-binding</keyword>
<keyword id="KW-0547">Nucleotide-binding</keyword>
<keyword id="KW-0648">Protein biosynthesis</keyword>
<keyword id="KW-1185">Reference proteome</keyword>
<reference key="1">
    <citation type="submission" date="2006-03" db="EMBL/GenBank/DDBJ databases">
        <title>Complete sequence of Shewanella denitrificans OS217.</title>
        <authorList>
            <consortium name="US DOE Joint Genome Institute"/>
            <person name="Copeland A."/>
            <person name="Lucas S."/>
            <person name="Lapidus A."/>
            <person name="Barry K."/>
            <person name="Detter J.C."/>
            <person name="Glavina del Rio T."/>
            <person name="Hammon N."/>
            <person name="Israni S."/>
            <person name="Dalin E."/>
            <person name="Tice H."/>
            <person name="Pitluck S."/>
            <person name="Brettin T."/>
            <person name="Bruce D."/>
            <person name="Han C."/>
            <person name="Tapia R."/>
            <person name="Gilna P."/>
            <person name="Kiss H."/>
            <person name="Schmutz J."/>
            <person name="Larimer F."/>
            <person name="Land M."/>
            <person name="Hauser L."/>
            <person name="Kyrpides N."/>
            <person name="Lykidis A."/>
            <person name="Richardson P."/>
        </authorList>
    </citation>
    <scope>NUCLEOTIDE SEQUENCE [LARGE SCALE GENOMIC DNA]</scope>
    <source>
        <strain>OS217 / ATCC BAA-1090 / DSM 15013</strain>
    </source>
</reference>
<dbReference type="EC" id="6.1.1.6" evidence="1"/>
<dbReference type="EMBL" id="CP000302">
    <property type="protein sequence ID" value="ABE56404.1"/>
    <property type="molecule type" value="Genomic_DNA"/>
</dbReference>
<dbReference type="RefSeq" id="WP_011497549.1">
    <property type="nucleotide sequence ID" value="NC_007954.1"/>
</dbReference>
<dbReference type="SMR" id="Q12JH2"/>
<dbReference type="STRING" id="318161.Sden_3127"/>
<dbReference type="KEGG" id="sdn:Sden_3127"/>
<dbReference type="eggNOG" id="COG1190">
    <property type="taxonomic scope" value="Bacteria"/>
</dbReference>
<dbReference type="HOGENOM" id="CLU_008255_6_0_6"/>
<dbReference type="OrthoDB" id="9802326at2"/>
<dbReference type="Proteomes" id="UP000001982">
    <property type="component" value="Chromosome"/>
</dbReference>
<dbReference type="GO" id="GO:0005829">
    <property type="term" value="C:cytosol"/>
    <property type="evidence" value="ECO:0007669"/>
    <property type="project" value="TreeGrafter"/>
</dbReference>
<dbReference type="GO" id="GO:0005524">
    <property type="term" value="F:ATP binding"/>
    <property type="evidence" value="ECO:0007669"/>
    <property type="project" value="UniProtKB-UniRule"/>
</dbReference>
<dbReference type="GO" id="GO:0004824">
    <property type="term" value="F:lysine-tRNA ligase activity"/>
    <property type="evidence" value="ECO:0007669"/>
    <property type="project" value="UniProtKB-UniRule"/>
</dbReference>
<dbReference type="GO" id="GO:0000287">
    <property type="term" value="F:magnesium ion binding"/>
    <property type="evidence" value="ECO:0007669"/>
    <property type="project" value="UniProtKB-UniRule"/>
</dbReference>
<dbReference type="GO" id="GO:0000049">
    <property type="term" value="F:tRNA binding"/>
    <property type="evidence" value="ECO:0007669"/>
    <property type="project" value="TreeGrafter"/>
</dbReference>
<dbReference type="GO" id="GO:0006430">
    <property type="term" value="P:lysyl-tRNA aminoacylation"/>
    <property type="evidence" value="ECO:0007669"/>
    <property type="project" value="UniProtKB-UniRule"/>
</dbReference>
<dbReference type="CDD" id="cd00775">
    <property type="entry name" value="LysRS_core"/>
    <property type="match status" value="1"/>
</dbReference>
<dbReference type="CDD" id="cd04322">
    <property type="entry name" value="LysRS_N"/>
    <property type="match status" value="1"/>
</dbReference>
<dbReference type="FunFam" id="2.40.50.140:FF:000024">
    <property type="entry name" value="Lysine--tRNA ligase"/>
    <property type="match status" value="1"/>
</dbReference>
<dbReference type="FunFam" id="3.30.930.10:FF:000001">
    <property type="entry name" value="Lysine--tRNA ligase"/>
    <property type="match status" value="1"/>
</dbReference>
<dbReference type="Gene3D" id="3.30.930.10">
    <property type="entry name" value="Bira Bifunctional Protein, Domain 2"/>
    <property type="match status" value="1"/>
</dbReference>
<dbReference type="Gene3D" id="2.40.50.140">
    <property type="entry name" value="Nucleic acid-binding proteins"/>
    <property type="match status" value="1"/>
</dbReference>
<dbReference type="HAMAP" id="MF_00252">
    <property type="entry name" value="Lys_tRNA_synth_class2"/>
    <property type="match status" value="1"/>
</dbReference>
<dbReference type="InterPro" id="IPR004364">
    <property type="entry name" value="Aa-tRNA-synt_II"/>
</dbReference>
<dbReference type="InterPro" id="IPR006195">
    <property type="entry name" value="aa-tRNA-synth_II"/>
</dbReference>
<dbReference type="InterPro" id="IPR045864">
    <property type="entry name" value="aa-tRNA-synth_II/BPL/LPL"/>
</dbReference>
<dbReference type="InterPro" id="IPR002313">
    <property type="entry name" value="Lys-tRNA-ligase_II"/>
</dbReference>
<dbReference type="InterPro" id="IPR044136">
    <property type="entry name" value="Lys-tRNA-ligase_II_N"/>
</dbReference>
<dbReference type="InterPro" id="IPR018149">
    <property type="entry name" value="Lys-tRNA-synth_II_C"/>
</dbReference>
<dbReference type="InterPro" id="IPR012340">
    <property type="entry name" value="NA-bd_OB-fold"/>
</dbReference>
<dbReference type="InterPro" id="IPR004365">
    <property type="entry name" value="NA-bd_OB_tRNA"/>
</dbReference>
<dbReference type="NCBIfam" id="TIGR00499">
    <property type="entry name" value="lysS_bact"/>
    <property type="match status" value="1"/>
</dbReference>
<dbReference type="NCBIfam" id="NF001756">
    <property type="entry name" value="PRK00484.1"/>
    <property type="match status" value="1"/>
</dbReference>
<dbReference type="PANTHER" id="PTHR42918:SF15">
    <property type="entry name" value="LYSINE--TRNA LIGASE, CHLOROPLASTIC_MITOCHONDRIAL"/>
    <property type="match status" value="1"/>
</dbReference>
<dbReference type="PANTHER" id="PTHR42918">
    <property type="entry name" value="LYSYL-TRNA SYNTHETASE"/>
    <property type="match status" value="1"/>
</dbReference>
<dbReference type="Pfam" id="PF00152">
    <property type="entry name" value="tRNA-synt_2"/>
    <property type="match status" value="1"/>
</dbReference>
<dbReference type="Pfam" id="PF01336">
    <property type="entry name" value="tRNA_anti-codon"/>
    <property type="match status" value="1"/>
</dbReference>
<dbReference type="PRINTS" id="PR00982">
    <property type="entry name" value="TRNASYNTHLYS"/>
</dbReference>
<dbReference type="SUPFAM" id="SSF55681">
    <property type="entry name" value="Class II aaRS and biotin synthetases"/>
    <property type="match status" value="1"/>
</dbReference>
<dbReference type="SUPFAM" id="SSF50249">
    <property type="entry name" value="Nucleic acid-binding proteins"/>
    <property type="match status" value="1"/>
</dbReference>
<dbReference type="PROSITE" id="PS50862">
    <property type="entry name" value="AA_TRNA_LIGASE_II"/>
    <property type="match status" value="1"/>
</dbReference>
<name>SYK_SHEDO</name>
<sequence>MTELVQDENKLIAERRAKLDHIRTQCPANAHPNTWERSHKAAELQAQYGENTKEELEALGYQTSIAGRVMAKRGPFLVIQDVSGRIQAYAGKPVQGDLKERYQGLDIGDIIGVKGQLHLSGKGDLYVNMEEYQLLTKALRPLPEKFHGLTDQETRYRQRYVDLIVNEESRNAFIMRSKVVSAIRNFMIKKEFMEVETPMMHVIPGGASARPFVTHHNALDMAMYLRIAPELYLKRLVVGGFERVFEINRNFRNEGLSPRHNPEFTMMEFYMAYADYQDLMDLTEEMLSSIAIDLLGSAQMPYGEHTVDFGGPYARLSMLEAIQKYNPENATIQAMTYEQVKDVEFMRDLASSLGIKLEKFWTCGQLLEEIFGETAEPKLMQPTFITGYPADISPLARRNDNNDFITDRFEFFIGGREVANGFSELNDAQDQDNRFKAQVNAKDAGDDEAMFYDADYITALEHGLPPTAGQGIGIDRLVMLFTNTHTIRDVILFPAMRPQA</sequence>
<proteinExistence type="inferred from homology"/>
<evidence type="ECO:0000255" key="1">
    <source>
        <dbReference type="HAMAP-Rule" id="MF_00252"/>
    </source>
</evidence>
<accession>Q12JH2</accession>
<gene>
    <name evidence="1" type="primary">lysS</name>
    <name type="ordered locus">Sden_3127</name>
</gene>
<protein>
    <recommendedName>
        <fullName evidence="1">Lysine--tRNA ligase</fullName>
        <ecNumber evidence="1">6.1.1.6</ecNumber>
    </recommendedName>
    <alternativeName>
        <fullName evidence="1">Lysyl-tRNA synthetase</fullName>
        <shortName evidence="1">LysRS</shortName>
    </alternativeName>
</protein>